<name>Y719_NITEU</name>
<dbReference type="EMBL" id="AL954747">
    <property type="protein sequence ID" value="CAD84630.1"/>
    <property type="molecule type" value="Genomic_DNA"/>
</dbReference>
<dbReference type="RefSeq" id="WP_011111337.1">
    <property type="nucleotide sequence ID" value="NC_004757.1"/>
</dbReference>
<dbReference type="SMR" id="Q82WG1"/>
<dbReference type="STRING" id="228410.NE0719"/>
<dbReference type="GeneID" id="87103911"/>
<dbReference type="KEGG" id="neu:NE0719"/>
<dbReference type="eggNOG" id="COG0792">
    <property type="taxonomic scope" value="Bacteria"/>
</dbReference>
<dbReference type="HOGENOM" id="CLU_115353_1_0_4"/>
<dbReference type="OrthoDB" id="9794876at2"/>
<dbReference type="PhylomeDB" id="Q82WG1"/>
<dbReference type="Proteomes" id="UP000001416">
    <property type="component" value="Chromosome"/>
</dbReference>
<dbReference type="GO" id="GO:0003676">
    <property type="term" value="F:nucleic acid binding"/>
    <property type="evidence" value="ECO:0007669"/>
    <property type="project" value="InterPro"/>
</dbReference>
<dbReference type="CDD" id="cd20736">
    <property type="entry name" value="PoNe_Nuclease"/>
    <property type="match status" value="1"/>
</dbReference>
<dbReference type="Gene3D" id="3.40.1350.10">
    <property type="match status" value="1"/>
</dbReference>
<dbReference type="HAMAP" id="MF_00048">
    <property type="entry name" value="UPF0102"/>
    <property type="match status" value="1"/>
</dbReference>
<dbReference type="InterPro" id="IPR011335">
    <property type="entry name" value="Restrct_endonuc-II-like"/>
</dbReference>
<dbReference type="InterPro" id="IPR011856">
    <property type="entry name" value="tRNA_endonuc-like_dom_sf"/>
</dbReference>
<dbReference type="InterPro" id="IPR003509">
    <property type="entry name" value="UPF0102_YraN-like"/>
</dbReference>
<dbReference type="NCBIfam" id="NF009150">
    <property type="entry name" value="PRK12497.1-3"/>
    <property type="match status" value="1"/>
</dbReference>
<dbReference type="NCBIfam" id="TIGR00252">
    <property type="entry name" value="YraN family protein"/>
    <property type="match status" value="1"/>
</dbReference>
<dbReference type="PANTHER" id="PTHR34039">
    <property type="entry name" value="UPF0102 PROTEIN YRAN"/>
    <property type="match status" value="1"/>
</dbReference>
<dbReference type="PANTHER" id="PTHR34039:SF1">
    <property type="entry name" value="UPF0102 PROTEIN YRAN"/>
    <property type="match status" value="1"/>
</dbReference>
<dbReference type="Pfam" id="PF02021">
    <property type="entry name" value="UPF0102"/>
    <property type="match status" value="1"/>
</dbReference>
<dbReference type="SUPFAM" id="SSF52980">
    <property type="entry name" value="Restriction endonuclease-like"/>
    <property type="match status" value="1"/>
</dbReference>
<comment type="similarity">
    <text evidence="1">Belongs to the UPF0102 family.</text>
</comment>
<keyword id="KW-1185">Reference proteome</keyword>
<evidence type="ECO:0000255" key="1">
    <source>
        <dbReference type="HAMAP-Rule" id="MF_00048"/>
    </source>
</evidence>
<sequence length="118" mass="13278">MSSAGNKGSDAEQCAAAFLQQQKLTLLEKNYRCRFGEIDLIMREDDTVVFVEVRMRSSDRFGGAAASITAAKQSRLIRTARHYLAGHEGDFPCRFDAVLISGNRENEIEWIRNAFDES</sequence>
<feature type="chain" id="PRO_0000167368" description="UPF0102 protein NE0719">
    <location>
        <begin position="1"/>
        <end position="118"/>
    </location>
</feature>
<accession>Q82WG1</accession>
<protein>
    <recommendedName>
        <fullName evidence="1">UPF0102 protein NE0719</fullName>
    </recommendedName>
</protein>
<organism>
    <name type="scientific">Nitrosomonas europaea (strain ATCC 19718 / CIP 103999 / KCTC 2705 / NBRC 14298)</name>
    <dbReference type="NCBI Taxonomy" id="228410"/>
    <lineage>
        <taxon>Bacteria</taxon>
        <taxon>Pseudomonadati</taxon>
        <taxon>Pseudomonadota</taxon>
        <taxon>Betaproteobacteria</taxon>
        <taxon>Nitrosomonadales</taxon>
        <taxon>Nitrosomonadaceae</taxon>
        <taxon>Nitrosomonas</taxon>
    </lineage>
</organism>
<proteinExistence type="inferred from homology"/>
<reference key="1">
    <citation type="journal article" date="2003" name="J. Bacteriol.">
        <title>Complete genome sequence of the ammonia-oxidizing bacterium and obligate chemolithoautotroph Nitrosomonas europaea.</title>
        <authorList>
            <person name="Chain P."/>
            <person name="Lamerdin J.E."/>
            <person name="Larimer F.W."/>
            <person name="Regala W."/>
            <person name="Lao V."/>
            <person name="Land M.L."/>
            <person name="Hauser L."/>
            <person name="Hooper A.B."/>
            <person name="Klotz M.G."/>
            <person name="Norton J."/>
            <person name="Sayavedra-Soto L.A."/>
            <person name="Arciero D.M."/>
            <person name="Hommes N.G."/>
            <person name="Whittaker M.M."/>
            <person name="Arp D.J."/>
        </authorList>
    </citation>
    <scope>NUCLEOTIDE SEQUENCE [LARGE SCALE GENOMIC DNA]</scope>
    <source>
        <strain>ATCC 19718 / CIP 103999 / KCTC 2705 / NBRC 14298</strain>
    </source>
</reference>
<gene>
    <name type="ordered locus">NE0719</name>
</gene>